<proteinExistence type="inferred from homology"/>
<organism>
    <name type="scientific">Anaplasma phagocytophilum (strain HZ)</name>
    <dbReference type="NCBI Taxonomy" id="212042"/>
    <lineage>
        <taxon>Bacteria</taxon>
        <taxon>Pseudomonadati</taxon>
        <taxon>Pseudomonadota</taxon>
        <taxon>Alphaproteobacteria</taxon>
        <taxon>Rickettsiales</taxon>
        <taxon>Anaplasmataceae</taxon>
        <taxon>Anaplasma</taxon>
        <taxon>phagocytophilum group</taxon>
    </lineage>
</organism>
<accession>Q2GIG1</accession>
<keyword id="KW-0066">ATP synthesis</keyword>
<keyword id="KW-0997">Cell inner membrane</keyword>
<keyword id="KW-1003">Cell membrane</keyword>
<keyword id="KW-0139">CF(1)</keyword>
<keyword id="KW-0375">Hydrogen ion transport</keyword>
<keyword id="KW-0406">Ion transport</keyword>
<keyword id="KW-0472">Membrane</keyword>
<keyword id="KW-0813">Transport</keyword>
<sequence length="180" mass="19845">MKGRAEYVYARVLVDLVKDNSEEVSAGIRSLLCACEDRDVRAFFVDPTVPFGVKVAALRDVQKACALDDTLVSFVCVVVEDGLFASLGGIFEKFFALLRRKLGKFNLEIISAAPLTEKEESKILRMLRAQYGDPEAIIRRTDPGILGGFVAKGDTFTVDASYVGQLRELTRISKEAVFSI</sequence>
<name>ATPD_ANAPZ</name>
<evidence type="ECO:0000255" key="1">
    <source>
        <dbReference type="HAMAP-Rule" id="MF_01416"/>
    </source>
</evidence>
<reference key="1">
    <citation type="journal article" date="2006" name="PLoS Genet.">
        <title>Comparative genomics of emerging human ehrlichiosis agents.</title>
        <authorList>
            <person name="Dunning Hotopp J.C."/>
            <person name="Lin M."/>
            <person name="Madupu R."/>
            <person name="Crabtree J."/>
            <person name="Angiuoli S.V."/>
            <person name="Eisen J.A."/>
            <person name="Seshadri R."/>
            <person name="Ren Q."/>
            <person name="Wu M."/>
            <person name="Utterback T.R."/>
            <person name="Smith S."/>
            <person name="Lewis M."/>
            <person name="Khouri H."/>
            <person name="Zhang C."/>
            <person name="Niu H."/>
            <person name="Lin Q."/>
            <person name="Ohashi N."/>
            <person name="Zhi N."/>
            <person name="Nelson W.C."/>
            <person name="Brinkac L.M."/>
            <person name="Dodson R.J."/>
            <person name="Rosovitz M.J."/>
            <person name="Sundaram J.P."/>
            <person name="Daugherty S.C."/>
            <person name="Davidsen T."/>
            <person name="Durkin A.S."/>
            <person name="Gwinn M.L."/>
            <person name="Haft D.H."/>
            <person name="Selengut J.D."/>
            <person name="Sullivan S.A."/>
            <person name="Zafar N."/>
            <person name="Zhou L."/>
            <person name="Benahmed F."/>
            <person name="Forberger H."/>
            <person name="Halpin R."/>
            <person name="Mulligan S."/>
            <person name="Robinson J."/>
            <person name="White O."/>
            <person name="Rikihisa Y."/>
            <person name="Tettelin H."/>
        </authorList>
    </citation>
    <scope>NUCLEOTIDE SEQUENCE [LARGE SCALE GENOMIC DNA]</scope>
    <source>
        <strain>HZ</strain>
    </source>
</reference>
<comment type="function">
    <text evidence="1">F(1)F(0) ATP synthase produces ATP from ADP in the presence of a proton or sodium gradient. F-type ATPases consist of two structural domains, F(1) containing the extramembraneous catalytic core and F(0) containing the membrane proton channel, linked together by a central stalk and a peripheral stalk. During catalysis, ATP synthesis in the catalytic domain of F(1) is coupled via a rotary mechanism of the central stalk subunits to proton translocation.</text>
</comment>
<comment type="function">
    <text evidence="1">This protein is part of the stalk that links CF(0) to CF(1). It either transmits conformational changes from CF(0) to CF(1) or is implicated in proton conduction.</text>
</comment>
<comment type="subunit">
    <text evidence="1">F-type ATPases have 2 components, F(1) - the catalytic core - and F(0) - the membrane proton channel. F(1) has five subunits: alpha(3), beta(3), gamma(1), delta(1), epsilon(1). F(0) has three main subunits: a(1), b(2) and c(10-14). The alpha and beta chains form an alternating ring which encloses part of the gamma chain. F(1) is attached to F(0) by a central stalk formed by the gamma and epsilon chains, while a peripheral stalk is formed by the delta and b chains.</text>
</comment>
<comment type="subcellular location">
    <subcellularLocation>
        <location evidence="1">Cell inner membrane</location>
        <topology evidence="1">Peripheral membrane protein</topology>
    </subcellularLocation>
</comment>
<comment type="similarity">
    <text evidence="1">Belongs to the ATPase delta chain family.</text>
</comment>
<gene>
    <name evidence="1" type="primary">atpH</name>
    <name type="ordered locus">APH_1335</name>
</gene>
<feature type="chain" id="PRO_0000382054" description="ATP synthase subunit delta">
    <location>
        <begin position="1"/>
        <end position="180"/>
    </location>
</feature>
<protein>
    <recommendedName>
        <fullName evidence="1">ATP synthase subunit delta</fullName>
    </recommendedName>
    <alternativeName>
        <fullName evidence="1">ATP synthase F(1) sector subunit delta</fullName>
    </alternativeName>
    <alternativeName>
        <fullName evidence="1">F-type ATPase subunit delta</fullName>
        <shortName evidence="1">F-ATPase subunit delta</shortName>
    </alternativeName>
</protein>
<dbReference type="EMBL" id="CP000235">
    <property type="protein sequence ID" value="ABD43230.1"/>
    <property type="molecule type" value="Genomic_DNA"/>
</dbReference>
<dbReference type="RefSeq" id="WP_011451347.1">
    <property type="nucleotide sequence ID" value="NC_007797.1"/>
</dbReference>
<dbReference type="SMR" id="Q2GIG1"/>
<dbReference type="STRING" id="212042.APH_1335"/>
<dbReference type="PaxDb" id="212042-APH_1335"/>
<dbReference type="EnsemblBacteria" id="ABD43230">
    <property type="protein sequence ID" value="ABD43230"/>
    <property type="gene ID" value="APH_1335"/>
</dbReference>
<dbReference type="KEGG" id="aph:APH_1335"/>
<dbReference type="eggNOG" id="COG0712">
    <property type="taxonomic scope" value="Bacteria"/>
</dbReference>
<dbReference type="HOGENOM" id="CLU_085114_1_1_5"/>
<dbReference type="Proteomes" id="UP000001943">
    <property type="component" value="Chromosome"/>
</dbReference>
<dbReference type="GO" id="GO:0005886">
    <property type="term" value="C:plasma membrane"/>
    <property type="evidence" value="ECO:0007669"/>
    <property type="project" value="UniProtKB-SubCell"/>
</dbReference>
<dbReference type="GO" id="GO:0045259">
    <property type="term" value="C:proton-transporting ATP synthase complex"/>
    <property type="evidence" value="ECO:0007669"/>
    <property type="project" value="UniProtKB-KW"/>
</dbReference>
<dbReference type="GO" id="GO:0046933">
    <property type="term" value="F:proton-transporting ATP synthase activity, rotational mechanism"/>
    <property type="evidence" value="ECO:0007669"/>
    <property type="project" value="UniProtKB-UniRule"/>
</dbReference>
<dbReference type="Gene3D" id="1.10.520.20">
    <property type="entry name" value="N-terminal domain of the delta subunit of the F1F0-ATP synthase"/>
    <property type="match status" value="1"/>
</dbReference>
<dbReference type="HAMAP" id="MF_01416">
    <property type="entry name" value="ATP_synth_delta_bact"/>
    <property type="match status" value="1"/>
</dbReference>
<dbReference type="InterPro" id="IPR026015">
    <property type="entry name" value="ATP_synth_OSCP/delta_N_sf"/>
</dbReference>
<dbReference type="InterPro" id="IPR000711">
    <property type="entry name" value="ATPase_OSCP/dsu"/>
</dbReference>
<dbReference type="PANTHER" id="PTHR11910">
    <property type="entry name" value="ATP SYNTHASE DELTA CHAIN"/>
    <property type="match status" value="1"/>
</dbReference>
<dbReference type="Pfam" id="PF00213">
    <property type="entry name" value="OSCP"/>
    <property type="match status" value="1"/>
</dbReference>
<dbReference type="SUPFAM" id="SSF47928">
    <property type="entry name" value="N-terminal domain of the delta subunit of the F1F0-ATP synthase"/>
    <property type="match status" value="1"/>
</dbReference>